<reference key="1">
    <citation type="journal article" date="2005" name="J. Bacteriol.">
        <title>Whole-genome sequence analysis of Pseudomonas syringae pv. phaseolicola 1448A reveals divergence among pathovars in genes involved in virulence and transposition.</title>
        <authorList>
            <person name="Joardar V."/>
            <person name="Lindeberg M."/>
            <person name="Jackson R.W."/>
            <person name="Selengut J."/>
            <person name="Dodson R."/>
            <person name="Brinkac L.M."/>
            <person name="Daugherty S.C."/>
            <person name="DeBoy R.T."/>
            <person name="Durkin A.S."/>
            <person name="Gwinn Giglio M."/>
            <person name="Madupu R."/>
            <person name="Nelson W.C."/>
            <person name="Rosovitz M.J."/>
            <person name="Sullivan S.A."/>
            <person name="Crabtree J."/>
            <person name="Creasy T."/>
            <person name="Davidsen T.M."/>
            <person name="Haft D.H."/>
            <person name="Zafar N."/>
            <person name="Zhou L."/>
            <person name="Halpin R."/>
            <person name="Holley T."/>
            <person name="Khouri H.M."/>
            <person name="Feldblyum T.V."/>
            <person name="White O."/>
            <person name="Fraser C.M."/>
            <person name="Chatterjee A.K."/>
            <person name="Cartinhour S."/>
            <person name="Schneider D."/>
            <person name="Mansfield J.W."/>
            <person name="Collmer A."/>
            <person name="Buell R."/>
        </authorList>
    </citation>
    <scope>NUCLEOTIDE SEQUENCE [LARGE SCALE GENOMIC DNA]</scope>
    <source>
        <strain>1448A / Race 6</strain>
    </source>
</reference>
<accession>Q48PU6</accession>
<name>METN1_PSE14</name>
<gene>
    <name evidence="1" type="primary">metN1</name>
    <name type="ordered locus">PSPPH_0268</name>
</gene>
<protein>
    <recommendedName>
        <fullName evidence="1">Methionine import ATP-binding protein MetN 1</fullName>
        <ecNumber evidence="1">7.4.2.11</ecNumber>
    </recommendedName>
</protein>
<sequence>MIEFHNVHKTYRVAGKEIPALHPTSLRVDGGQVFGIIGHSGAGKSTLLRLINRLETPSGGQIVVDGEDVTALDANGLRRFRQQVGMIFQHFNLLASKTVADNVAMPLTLAGDMSRKQIDQRVAELLKRVGLSDHAKKYPAQLSGGQKQRVGIARALATKPKILLCDEATSALDPQTTASVLQLLAEINRELKLTIVLITHEMDVIRRVCDQVAVMDAGVIVEQGKVADVFLHPQHPTTRRFVQEDDQIDENEQRDDFAHVQGRIVRLTFQGDATYAPLLGTVARETGVDYSILAGRIDRIKDTPYGQLTLAITGGDMDAAFARFTAADVHMEVLR</sequence>
<proteinExistence type="inferred from homology"/>
<dbReference type="EC" id="7.4.2.11" evidence="1"/>
<dbReference type="EMBL" id="CP000058">
    <property type="protein sequence ID" value="AAZ37258.1"/>
    <property type="molecule type" value="Genomic_DNA"/>
</dbReference>
<dbReference type="RefSeq" id="WP_011167412.1">
    <property type="nucleotide sequence ID" value="NC_005773.3"/>
</dbReference>
<dbReference type="SMR" id="Q48PU6"/>
<dbReference type="KEGG" id="psp:PSPPH_0268"/>
<dbReference type="eggNOG" id="COG1135">
    <property type="taxonomic scope" value="Bacteria"/>
</dbReference>
<dbReference type="HOGENOM" id="CLU_000604_1_3_6"/>
<dbReference type="Proteomes" id="UP000000551">
    <property type="component" value="Chromosome"/>
</dbReference>
<dbReference type="GO" id="GO:0005886">
    <property type="term" value="C:plasma membrane"/>
    <property type="evidence" value="ECO:0007669"/>
    <property type="project" value="UniProtKB-SubCell"/>
</dbReference>
<dbReference type="GO" id="GO:0033232">
    <property type="term" value="F:ABC-type D-methionine transporter activity"/>
    <property type="evidence" value="ECO:0007669"/>
    <property type="project" value="UniProtKB-EC"/>
</dbReference>
<dbReference type="GO" id="GO:0005524">
    <property type="term" value="F:ATP binding"/>
    <property type="evidence" value="ECO:0007669"/>
    <property type="project" value="UniProtKB-KW"/>
</dbReference>
<dbReference type="GO" id="GO:0016887">
    <property type="term" value="F:ATP hydrolysis activity"/>
    <property type="evidence" value="ECO:0007669"/>
    <property type="project" value="InterPro"/>
</dbReference>
<dbReference type="CDD" id="cd03258">
    <property type="entry name" value="ABC_MetN_methionine_transporter"/>
    <property type="match status" value="1"/>
</dbReference>
<dbReference type="FunFam" id="3.40.50.300:FF:000056">
    <property type="entry name" value="Cell division ATP-binding protein FtsE"/>
    <property type="match status" value="1"/>
</dbReference>
<dbReference type="FunFam" id="3.30.70.260:FF:000038">
    <property type="entry name" value="Methionine import ATP-binding protein MetN"/>
    <property type="match status" value="1"/>
</dbReference>
<dbReference type="Gene3D" id="3.30.70.260">
    <property type="match status" value="1"/>
</dbReference>
<dbReference type="Gene3D" id="3.40.50.300">
    <property type="entry name" value="P-loop containing nucleotide triphosphate hydrolases"/>
    <property type="match status" value="1"/>
</dbReference>
<dbReference type="InterPro" id="IPR003593">
    <property type="entry name" value="AAA+_ATPase"/>
</dbReference>
<dbReference type="InterPro" id="IPR003439">
    <property type="entry name" value="ABC_transporter-like_ATP-bd"/>
</dbReference>
<dbReference type="InterPro" id="IPR017871">
    <property type="entry name" value="ABC_transporter-like_CS"/>
</dbReference>
<dbReference type="InterPro" id="IPR045865">
    <property type="entry name" value="ACT-like_dom_sf"/>
</dbReference>
<dbReference type="InterPro" id="IPR041701">
    <property type="entry name" value="MetN_ABC"/>
</dbReference>
<dbReference type="InterPro" id="IPR050086">
    <property type="entry name" value="MetN_ABC_transporter-like"/>
</dbReference>
<dbReference type="InterPro" id="IPR018449">
    <property type="entry name" value="NIL_domain"/>
</dbReference>
<dbReference type="InterPro" id="IPR027417">
    <property type="entry name" value="P-loop_NTPase"/>
</dbReference>
<dbReference type="PANTHER" id="PTHR43166">
    <property type="entry name" value="AMINO ACID IMPORT ATP-BINDING PROTEIN"/>
    <property type="match status" value="1"/>
</dbReference>
<dbReference type="PANTHER" id="PTHR43166:SF30">
    <property type="entry name" value="METHIONINE IMPORT ATP-BINDING PROTEIN METN"/>
    <property type="match status" value="1"/>
</dbReference>
<dbReference type="Pfam" id="PF00005">
    <property type="entry name" value="ABC_tran"/>
    <property type="match status" value="1"/>
</dbReference>
<dbReference type="Pfam" id="PF09383">
    <property type="entry name" value="NIL"/>
    <property type="match status" value="1"/>
</dbReference>
<dbReference type="SMART" id="SM00382">
    <property type="entry name" value="AAA"/>
    <property type="match status" value="1"/>
</dbReference>
<dbReference type="SMART" id="SM00930">
    <property type="entry name" value="NIL"/>
    <property type="match status" value="1"/>
</dbReference>
<dbReference type="SUPFAM" id="SSF55021">
    <property type="entry name" value="ACT-like"/>
    <property type="match status" value="1"/>
</dbReference>
<dbReference type="SUPFAM" id="SSF52540">
    <property type="entry name" value="P-loop containing nucleoside triphosphate hydrolases"/>
    <property type="match status" value="1"/>
</dbReference>
<dbReference type="PROSITE" id="PS00211">
    <property type="entry name" value="ABC_TRANSPORTER_1"/>
    <property type="match status" value="1"/>
</dbReference>
<dbReference type="PROSITE" id="PS50893">
    <property type="entry name" value="ABC_TRANSPORTER_2"/>
    <property type="match status" value="1"/>
</dbReference>
<dbReference type="PROSITE" id="PS51264">
    <property type="entry name" value="METN"/>
    <property type="match status" value="1"/>
</dbReference>
<comment type="function">
    <text evidence="1">Part of the ABC transporter complex MetNIQ involved in methionine import. Responsible for energy coupling to the transport system.</text>
</comment>
<comment type="catalytic activity">
    <reaction evidence="1">
        <text>L-methionine(out) + ATP + H2O = L-methionine(in) + ADP + phosphate + H(+)</text>
        <dbReference type="Rhea" id="RHEA:29779"/>
        <dbReference type="ChEBI" id="CHEBI:15377"/>
        <dbReference type="ChEBI" id="CHEBI:15378"/>
        <dbReference type="ChEBI" id="CHEBI:30616"/>
        <dbReference type="ChEBI" id="CHEBI:43474"/>
        <dbReference type="ChEBI" id="CHEBI:57844"/>
        <dbReference type="ChEBI" id="CHEBI:456216"/>
        <dbReference type="EC" id="7.4.2.11"/>
    </reaction>
</comment>
<comment type="catalytic activity">
    <reaction evidence="1">
        <text>D-methionine(out) + ATP + H2O = D-methionine(in) + ADP + phosphate + H(+)</text>
        <dbReference type="Rhea" id="RHEA:29767"/>
        <dbReference type="ChEBI" id="CHEBI:15377"/>
        <dbReference type="ChEBI" id="CHEBI:15378"/>
        <dbReference type="ChEBI" id="CHEBI:30616"/>
        <dbReference type="ChEBI" id="CHEBI:43474"/>
        <dbReference type="ChEBI" id="CHEBI:57932"/>
        <dbReference type="ChEBI" id="CHEBI:456216"/>
        <dbReference type="EC" id="7.4.2.11"/>
    </reaction>
</comment>
<comment type="subunit">
    <text evidence="1">The complex is composed of two ATP-binding proteins (MetN), two transmembrane proteins (MetI) and a solute-binding protein (MetQ).</text>
</comment>
<comment type="subcellular location">
    <subcellularLocation>
        <location evidence="1">Cell inner membrane</location>
        <topology evidence="1">Peripheral membrane protein</topology>
    </subcellularLocation>
</comment>
<comment type="similarity">
    <text evidence="1">Belongs to the ABC transporter superfamily. Methionine importer (TC 3.A.1.24) family.</text>
</comment>
<evidence type="ECO:0000255" key="1">
    <source>
        <dbReference type="HAMAP-Rule" id="MF_01719"/>
    </source>
</evidence>
<keyword id="KW-0029">Amino-acid transport</keyword>
<keyword id="KW-0067">ATP-binding</keyword>
<keyword id="KW-0997">Cell inner membrane</keyword>
<keyword id="KW-1003">Cell membrane</keyword>
<keyword id="KW-0472">Membrane</keyword>
<keyword id="KW-0547">Nucleotide-binding</keyword>
<keyword id="KW-1278">Translocase</keyword>
<keyword id="KW-0813">Transport</keyword>
<organism>
    <name type="scientific">Pseudomonas savastanoi pv. phaseolicola (strain 1448A / Race 6)</name>
    <name type="common">Pseudomonas syringae pv. phaseolicola (strain 1448A / Race 6)</name>
    <dbReference type="NCBI Taxonomy" id="264730"/>
    <lineage>
        <taxon>Bacteria</taxon>
        <taxon>Pseudomonadati</taxon>
        <taxon>Pseudomonadota</taxon>
        <taxon>Gammaproteobacteria</taxon>
        <taxon>Pseudomonadales</taxon>
        <taxon>Pseudomonadaceae</taxon>
        <taxon>Pseudomonas</taxon>
    </lineage>
</organism>
<feature type="chain" id="PRO_0000270354" description="Methionine import ATP-binding protein MetN 1">
    <location>
        <begin position="1"/>
        <end position="335"/>
    </location>
</feature>
<feature type="domain" description="ABC transporter" evidence="1">
    <location>
        <begin position="2"/>
        <end position="242"/>
    </location>
</feature>
<feature type="binding site" evidence="1">
    <location>
        <begin position="38"/>
        <end position="45"/>
    </location>
    <ligand>
        <name>ATP</name>
        <dbReference type="ChEBI" id="CHEBI:30616"/>
    </ligand>
</feature>